<proteinExistence type="inferred from homology"/>
<evidence type="ECO:0000255" key="1">
    <source>
        <dbReference type="HAMAP-Rule" id="MF_01269"/>
    </source>
</evidence>
<reference key="1">
    <citation type="journal article" date="2009" name="BMC Genomics">
        <title>Pseudogene accumulation in the evolutionary histories of Salmonella enterica serovars Paratyphi A and Typhi.</title>
        <authorList>
            <person name="Holt K.E."/>
            <person name="Thomson N.R."/>
            <person name="Wain J."/>
            <person name="Langridge G.C."/>
            <person name="Hasan R."/>
            <person name="Bhutta Z.A."/>
            <person name="Quail M.A."/>
            <person name="Norbertczak H."/>
            <person name="Walker D."/>
            <person name="Simmonds M."/>
            <person name="White B."/>
            <person name="Bason N."/>
            <person name="Mungall K."/>
            <person name="Dougan G."/>
            <person name="Parkhill J."/>
        </authorList>
    </citation>
    <scope>NUCLEOTIDE SEQUENCE [LARGE SCALE GENOMIC DNA]</scope>
    <source>
        <strain>AKU_12601</strain>
    </source>
</reference>
<keyword id="KW-0028">Amino-acid biosynthesis</keyword>
<keyword id="KW-0057">Aromatic amino acid biosynthesis</keyword>
<keyword id="KW-0067">ATP-binding</keyword>
<keyword id="KW-0963">Cytoplasm</keyword>
<keyword id="KW-0418">Kinase</keyword>
<keyword id="KW-0460">Magnesium</keyword>
<keyword id="KW-0479">Metal-binding</keyword>
<keyword id="KW-0547">Nucleotide-binding</keyword>
<keyword id="KW-0808">Transferase</keyword>
<organism>
    <name type="scientific">Salmonella paratyphi A (strain AKU_12601)</name>
    <dbReference type="NCBI Taxonomy" id="554290"/>
    <lineage>
        <taxon>Bacteria</taxon>
        <taxon>Pseudomonadati</taxon>
        <taxon>Pseudomonadota</taxon>
        <taxon>Gammaproteobacteria</taxon>
        <taxon>Enterobacterales</taxon>
        <taxon>Enterobacteriaceae</taxon>
        <taxon>Salmonella</taxon>
    </lineage>
</organism>
<accession>B5BDE5</accession>
<protein>
    <recommendedName>
        <fullName evidence="1">Shikimate kinase 2</fullName>
        <shortName evidence="1">SK 2</shortName>
        <ecNumber evidence="1">2.7.1.71</ecNumber>
    </recommendedName>
</protein>
<feature type="chain" id="PRO_1000140143" description="Shikimate kinase 2">
    <location>
        <begin position="1"/>
        <end position="181"/>
    </location>
</feature>
<feature type="region of interest" description="LID domain">
    <location>
        <begin position="112"/>
        <end position="126"/>
    </location>
</feature>
<feature type="binding site" evidence="1">
    <location>
        <begin position="12"/>
        <end position="17"/>
    </location>
    <ligand>
        <name>ATP</name>
        <dbReference type="ChEBI" id="CHEBI:30616"/>
    </ligand>
</feature>
<feature type="binding site" evidence="1">
    <location>
        <position position="16"/>
    </location>
    <ligand>
        <name>Mg(2+)</name>
        <dbReference type="ChEBI" id="CHEBI:18420"/>
    </ligand>
</feature>
<feature type="binding site" evidence="1">
    <location>
        <position position="32"/>
    </location>
    <ligand>
        <name>Mg(2+)</name>
        <dbReference type="ChEBI" id="CHEBI:18420"/>
    </ligand>
</feature>
<feature type="binding site" evidence="1">
    <location>
        <position position="34"/>
    </location>
    <ligand>
        <name>substrate</name>
    </ligand>
</feature>
<feature type="binding site" evidence="1">
    <location>
        <position position="58"/>
    </location>
    <ligand>
        <name>substrate</name>
    </ligand>
</feature>
<feature type="binding site" evidence="1">
    <location>
        <position position="79"/>
    </location>
    <ligand>
        <name>substrate</name>
    </ligand>
</feature>
<feature type="binding site" evidence="1">
    <location>
        <position position="120"/>
    </location>
    <ligand>
        <name>ATP</name>
        <dbReference type="ChEBI" id="CHEBI:30616"/>
    </ligand>
</feature>
<feature type="binding site" evidence="1">
    <location>
        <position position="139"/>
    </location>
    <ligand>
        <name>substrate</name>
    </ligand>
</feature>
<comment type="function">
    <text evidence="1">Catalyzes the specific phosphorylation of the 3-hydroxyl group of shikimic acid using ATP as a cosubstrate.</text>
</comment>
<comment type="catalytic activity">
    <reaction evidence="1">
        <text>shikimate + ATP = 3-phosphoshikimate + ADP + H(+)</text>
        <dbReference type="Rhea" id="RHEA:13121"/>
        <dbReference type="ChEBI" id="CHEBI:15378"/>
        <dbReference type="ChEBI" id="CHEBI:30616"/>
        <dbReference type="ChEBI" id="CHEBI:36208"/>
        <dbReference type="ChEBI" id="CHEBI:145989"/>
        <dbReference type="ChEBI" id="CHEBI:456216"/>
        <dbReference type="EC" id="2.7.1.71"/>
    </reaction>
</comment>
<comment type="cofactor">
    <cofactor evidence="1">
        <name>Mg(2+)</name>
        <dbReference type="ChEBI" id="CHEBI:18420"/>
    </cofactor>
    <text evidence="1">Binds 1 Mg(2+) ion per subunit.</text>
</comment>
<comment type="pathway">
    <text evidence="1">Metabolic intermediate biosynthesis; chorismate biosynthesis; chorismate from D-erythrose 4-phosphate and phosphoenolpyruvate: step 5/7.</text>
</comment>
<comment type="subunit">
    <text evidence="1">Monomer.</text>
</comment>
<comment type="subcellular location">
    <subcellularLocation>
        <location evidence="1">Cytoplasm</location>
    </subcellularLocation>
</comment>
<comment type="domain">
    <text evidence="1">The LID domain closes over the active site upon ATP binding.</text>
</comment>
<comment type="similarity">
    <text evidence="1">Belongs to the shikimate kinase family. AroL subfamily.</text>
</comment>
<name>AROL_SALPK</name>
<dbReference type="EC" id="2.7.1.71" evidence="1"/>
<dbReference type="EMBL" id="FM200053">
    <property type="protein sequence ID" value="CAR60388.1"/>
    <property type="molecule type" value="Genomic_DNA"/>
</dbReference>
<dbReference type="RefSeq" id="WP_000983569.1">
    <property type="nucleotide sequence ID" value="NC_011147.1"/>
</dbReference>
<dbReference type="SMR" id="B5BDE5"/>
<dbReference type="KEGG" id="sek:SSPA2178"/>
<dbReference type="HOGENOM" id="CLU_057607_4_3_6"/>
<dbReference type="UniPathway" id="UPA00053">
    <property type="reaction ID" value="UER00088"/>
</dbReference>
<dbReference type="Proteomes" id="UP000001869">
    <property type="component" value="Chromosome"/>
</dbReference>
<dbReference type="GO" id="GO:0005829">
    <property type="term" value="C:cytosol"/>
    <property type="evidence" value="ECO:0007669"/>
    <property type="project" value="TreeGrafter"/>
</dbReference>
<dbReference type="GO" id="GO:0005524">
    <property type="term" value="F:ATP binding"/>
    <property type="evidence" value="ECO:0007669"/>
    <property type="project" value="UniProtKB-UniRule"/>
</dbReference>
<dbReference type="GO" id="GO:0000287">
    <property type="term" value="F:magnesium ion binding"/>
    <property type="evidence" value="ECO:0007669"/>
    <property type="project" value="UniProtKB-UniRule"/>
</dbReference>
<dbReference type="GO" id="GO:0004765">
    <property type="term" value="F:shikimate kinase activity"/>
    <property type="evidence" value="ECO:0007669"/>
    <property type="project" value="UniProtKB-UniRule"/>
</dbReference>
<dbReference type="GO" id="GO:0008652">
    <property type="term" value="P:amino acid biosynthetic process"/>
    <property type="evidence" value="ECO:0007669"/>
    <property type="project" value="UniProtKB-KW"/>
</dbReference>
<dbReference type="GO" id="GO:0009073">
    <property type="term" value="P:aromatic amino acid family biosynthetic process"/>
    <property type="evidence" value="ECO:0007669"/>
    <property type="project" value="UniProtKB-KW"/>
</dbReference>
<dbReference type="GO" id="GO:0009423">
    <property type="term" value="P:chorismate biosynthetic process"/>
    <property type="evidence" value="ECO:0007669"/>
    <property type="project" value="UniProtKB-UniRule"/>
</dbReference>
<dbReference type="CDD" id="cd00464">
    <property type="entry name" value="SK"/>
    <property type="match status" value="1"/>
</dbReference>
<dbReference type="FunFam" id="3.40.50.300:FF:000408">
    <property type="entry name" value="Shikimate kinase 2"/>
    <property type="match status" value="1"/>
</dbReference>
<dbReference type="Gene3D" id="3.40.50.300">
    <property type="entry name" value="P-loop containing nucleotide triphosphate hydrolases"/>
    <property type="match status" value="1"/>
</dbReference>
<dbReference type="HAMAP" id="MF_00109">
    <property type="entry name" value="Shikimate_kinase"/>
    <property type="match status" value="1"/>
</dbReference>
<dbReference type="HAMAP" id="MF_01269">
    <property type="entry name" value="Shikimate_kinase_2"/>
    <property type="match status" value="1"/>
</dbReference>
<dbReference type="InterPro" id="IPR027417">
    <property type="entry name" value="P-loop_NTPase"/>
</dbReference>
<dbReference type="InterPro" id="IPR031322">
    <property type="entry name" value="Shikimate/glucono_kinase"/>
</dbReference>
<dbReference type="InterPro" id="IPR000623">
    <property type="entry name" value="Shikimate_kinase/TSH1"/>
</dbReference>
<dbReference type="InterPro" id="IPR027544">
    <property type="entry name" value="Shikimate_kinase_2"/>
</dbReference>
<dbReference type="InterPro" id="IPR023000">
    <property type="entry name" value="Shikimate_kinase_CS"/>
</dbReference>
<dbReference type="NCBIfam" id="NF002988">
    <property type="entry name" value="PRK03731.1"/>
    <property type="match status" value="1"/>
</dbReference>
<dbReference type="PANTHER" id="PTHR21087">
    <property type="entry name" value="SHIKIMATE KINASE"/>
    <property type="match status" value="1"/>
</dbReference>
<dbReference type="PANTHER" id="PTHR21087:SF21">
    <property type="entry name" value="SHIKIMATE KINASE 2"/>
    <property type="match status" value="1"/>
</dbReference>
<dbReference type="Pfam" id="PF01202">
    <property type="entry name" value="SKI"/>
    <property type="match status" value="1"/>
</dbReference>
<dbReference type="PRINTS" id="PR01100">
    <property type="entry name" value="SHIKIMTKNASE"/>
</dbReference>
<dbReference type="SUPFAM" id="SSF52540">
    <property type="entry name" value="P-loop containing nucleoside triphosphate hydrolases"/>
    <property type="match status" value="1"/>
</dbReference>
<dbReference type="PROSITE" id="PS01128">
    <property type="entry name" value="SHIKIMATE_KINASE"/>
    <property type="match status" value="1"/>
</dbReference>
<sequence length="181" mass="19804">MMQPLYLVGPRGCGKTTIGMALAQATGFRFADTDRWLQSHVQMSVADIVEKEGWGGFRARETAALEAVSAPSTVVATGGGIILTEYNRRYMHRVGVVIYLCAPVSTLVNRLEAEPEADLRPTLTGKPLSEEVREVLEQRDALYRETAHYIIDATKAPAQVVSEIIAALPPSTQRLQGDVYT</sequence>
<gene>
    <name evidence="1" type="primary">aroL</name>
    <name type="ordered locus">SSPA2178</name>
</gene>